<feature type="chain" id="PRO_0000264616" description="Dapper homolog 3">
    <location>
        <begin position="1"/>
        <end position="629"/>
    </location>
</feature>
<feature type="region of interest" description="Disordered" evidence="4">
    <location>
        <begin position="50"/>
        <end position="76"/>
    </location>
</feature>
<feature type="region of interest" description="Disordered" evidence="4">
    <location>
        <begin position="105"/>
        <end position="574"/>
    </location>
</feature>
<feature type="coiled-coil region" evidence="3">
    <location>
        <begin position="63"/>
        <end position="87"/>
    </location>
</feature>
<feature type="short sequence motif" description="PDZ-binding" evidence="1">
    <location>
        <begin position="626"/>
        <end position="629"/>
    </location>
</feature>
<feature type="compositionally biased region" description="Acidic residues" evidence="4">
    <location>
        <begin position="56"/>
        <end position="69"/>
    </location>
</feature>
<feature type="compositionally biased region" description="Low complexity" evidence="4">
    <location>
        <begin position="105"/>
        <end position="150"/>
    </location>
</feature>
<feature type="compositionally biased region" description="Basic and acidic residues" evidence="4">
    <location>
        <begin position="301"/>
        <end position="311"/>
    </location>
</feature>
<feature type="compositionally biased region" description="Low complexity" evidence="4">
    <location>
        <begin position="316"/>
        <end position="335"/>
    </location>
</feature>
<feature type="compositionally biased region" description="Pro residues" evidence="4">
    <location>
        <begin position="336"/>
        <end position="348"/>
    </location>
</feature>
<feature type="compositionally biased region" description="Low complexity" evidence="4">
    <location>
        <begin position="525"/>
        <end position="535"/>
    </location>
</feature>
<feature type="compositionally biased region" description="Gly residues" evidence="4">
    <location>
        <begin position="536"/>
        <end position="546"/>
    </location>
</feature>
<feature type="compositionally biased region" description="Low complexity" evidence="4">
    <location>
        <begin position="547"/>
        <end position="568"/>
    </location>
</feature>
<feature type="modified residue" description="Phosphoserine" evidence="7">
    <location>
        <position position="6"/>
    </location>
</feature>
<feature type="modified residue" description="Phosphoserine" evidence="7">
    <location>
        <position position="165"/>
    </location>
</feature>
<feature type="modified residue" description="Phosphoserine" evidence="2">
    <location>
        <position position="239"/>
    </location>
</feature>
<feature type="modified residue" description="Omega-N-methylarginine" evidence="2">
    <location>
        <position position="258"/>
    </location>
</feature>
<feature type="modified residue" description="Phosphoserine" evidence="7">
    <location>
        <position position="426"/>
    </location>
</feature>
<feature type="modified residue" description="Phosphoserine" evidence="2">
    <location>
        <position position="478"/>
    </location>
</feature>
<evidence type="ECO:0000250" key="1"/>
<evidence type="ECO:0000250" key="2">
    <source>
        <dbReference type="UniProtKB" id="Q0PHV7"/>
    </source>
</evidence>
<evidence type="ECO:0000255" key="3"/>
<evidence type="ECO:0000256" key="4">
    <source>
        <dbReference type="SAM" id="MobiDB-lite"/>
    </source>
</evidence>
<evidence type="ECO:0000269" key="5">
    <source>
    </source>
</evidence>
<evidence type="ECO:0000305" key="6"/>
<evidence type="ECO:0007744" key="7">
    <source>
    </source>
</evidence>
<protein>
    <recommendedName>
        <fullName>Dapper homolog 3</fullName>
    </recommendedName>
    <alternativeName>
        <fullName>Antagonist of beta-catenin Dapper homolog 3</fullName>
    </alternativeName>
    <alternativeName>
        <fullName>Arginine-rich region 1 protein</fullName>
    </alternativeName>
    <alternativeName>
        <fullName>Dapper antagonist of catenin 3</fullName>
    </alternativeName>
</protein>
<dbReference type="EMBL" id="BC016161">
    <property type="protein sequence ID" value="AAH16161.1"/>
    <property type="status" value="ALT_SEQ"/>
    <property type="molecule type" value="mRNA"/>
</dbReference>
<dbReference type="EMBL" id="BI603646">
    <property type="status" value="NOT_ANNOTATED_CDS"/>
    <property type="molecule type" value="mRNA"/>
</dbReference>
<dbReference type="CCDS" id="CCDS12688.2"/>
<dbReference type="RefSeq" id="NP_001287975.1">
    <property type="nucleotide sequence ID" value="NM_001301046.1"/>
</dbReference>
<dbReference type="RefSeq" id="NP_659493.2">
    <property type="nucleotide sequence ID" value="NM_145056.3"/>
</dbReference>
<dbReference type="RefSeq" id="XP_011524801.1">
    <property type="nucleotide sequence ID" value="XM_011526499.2"/>
</dbReference>
<dbReference type="RefSeq" id="XP_011524802.1">
    <property type="nucleotide sequence ID" value="XM_011526500.2"/>
</dbReference>
<dbReference type="SMR" id="Q96B18"/>
<dbReference type="BioGRID" id="127095">
    <property type="interactions" value="21"/>
</dbReference>
<dbReference type="FunCoup" id="Q96B18">
    <property type="interactions" value="377"/>
</dbReference>
<dbReference type="IntAct" id="Q96B18">
    <property type="interactions" value="8"/>
</dbReference>
<dbReference type="STRING" id="9606.ENSP00000375783"/>
<dbReference type="GlyGen" id="Q96B18">
    <property type="glycosylation" value="3 sites, 1 O-linked glycan (2 sites)"/>
</dbReference>
<dbReference type="iPTMnet" id="Q96B18"/>
<dbReference type="PhosphoSitePlus" id="Q96B18"/>
<dbReference type="BioMuta" id="DACT3"/>
<dbReference type="DMDM" id="119368655"/>
<dbReference type="jPOST" id="Q96B18"/>
<dbReference type="MassIVE" id="Q96B18"/>
<dbReference type="PaxDb" id="9606-ENSP00000375783"/>
<dbReference type="PeptideAtlas" id="Q96B18"/>
<dbReference type="ProteomicsDB" id="76034"/>
<dbReference type="Antibodypedia" id="31468">
    <property type="antibodies" value="212 antibodies from 26 providers"/>
</dbReference>
<dbReference type="DNASU" id="147906"/>
<dbReference type="Ensembl" id="ENST00000391916.7">
    <property type="protein sequence ID" value="ENSP00000375783.2"/>
    <property type="gene ID" value="ENSG00000197380.11"/>
</dbReference>
<dbReference type="GeneID" id="147906"/>
<dbReference type="KEGG" id="hsa:147906"/>
<dbReference type="MANE-Select" id="ENST00000391916.7">
    <property type="protein sequence ID" value="ENSP00000375783.2"/>
    <property type="RefSeq nucleotide sequence ID" value="NM_145056.3"/>
    <property type="RefSeq protein sequence ID" value="NP_659493.2"/>
</dbReference>
<dbReference type="UCSC" id="uc010ekq.3">
    <property type="organism name" value="human"/>
</dbReference>
<dbReference type="AGR" id="HGNC:30745"/>
<dbReference type="CTD" id="147906"/>
<dbReference type="DisGeNET" id="147906"/>
<dbReference type="GeneCards" id="DACT3"/>
<dbReference type="HGNC" id="HGNC:30745">
    <property type="gene designation" value="DACT3"/>
</dbReference>
<dbReference type="HPA" id="ENSG00000197380">
    <property type="expression patterns" value="Tissue enhanced (brain)"/>
</dbReference>
<dbReference type="MIM" id="611112">
    <property type="type" value="gene"/>
</dbReference>
<dbReference type="neXtProt" id="NX_Q96B18"/>
<dbReference type="OpenTargets" id="ENSG00000197380"/>
<dbReference type="PharmGKB" id="PA162383145"/>
<dbReference type="VEuPathDB" id="HostDB:ENSG00000197380"/>
<dbReference type="eggNOG" id="KOG4119">
    <property type="taxonomic scope" value="Eukaryota"/>
</dbReference>
<dbReference type="GeneTree" id="ENSGT00950000183181"/>
<dbReference type="HOGENOM" id="CLU_031461_0_0_1"/>
<dbReference type="InParanoid" id="Q96B18"/>
<dbReference type="OMA" id="RYPPDPF"/>
<dbReference type="OrthoDB" id="9886203at2759"/>
<dbReference type="PAN-GO" id="Q96B18">
    <property type="GO annotations" value="2 GO annotations based on evolutionary models"/>
</dbReference>
<dbReference type="PhylomeDB" id="Q96B18"/>
<dbReference type="TreeFam" id="TF331300"/>
<dbReference type="PathwayCommons" id="Q96B18"/>
<dbReference type="SignaLink" id="Q96B18"/>
<dbReference type="SIGNOR" id="Q96B18"/>
<dbReference type="BioGRID-ORCS" id="147906">
    <property type="hits" value="24 hits in 1158 CRISPR screens"/>
</dbReference>
<dbReference type="ChiTaRS" id="DACT3">
    <property type="organism name" value="human"/>
</dbReference>
<dbReference type="GenomeRNAi" id="147906"/>
<dbReference type="Pharos" id="Q96B18">
    <property type="development level" value="Tbio"/>
</dbReference>
<dbReference type="PRO" id="PR:Q96B18"/>
<dbReference type="Proteomes" id="UP000005640">
    <property type="component" value="Chromosome 19"/>
</dbReference>
<dbReference type="RNAct" id="Q96B18">
    <property type="molecule type" value="protein"/>
</dbReference>
<dbReference type="Bgee" id="ENSG00000197380">
    <property type="expression patterns" value="Expressed in popliteal artery and 154 other cell types or tissues"/>
</dbReference>
<dbReference type="ExpressionAtlas" id="Q96B18">
    <property type="expression patterns" value="baseline and differential"/>
</dbReference>
<dbReference type="GO" id="GO:0005737">
    <property type="term" value="C:cytoplasm"/>
    <property type="evidence" value="ECO:0000318"/>
    <property type="project" value="GO_Central"/>
</dbReference>
<dbReference type="GO" id="GO:0070097">
    <property type="term" value="F:delta-catenin binding"/>
    <property type="evidence" value="ECO:0000250"/>
    <property type="project" value="UniProtKB"/>
</dbReference>
<dbReference type="GO" id="GO:0042802">
    <property type="term" value="F:identical protein binding"/>
    <property type="evidence" value="ECO:0007669"/>
    <property type="project" value="Ensembl"/>
</dbReference>
<dbReference type="GO" id="GO:0051018">
    <property type="term" value="F:protein kinase A binding"/>
    <property type="evidence" value="ECO:0000250"/>
    <property type="project" value="UniProtKB"/>
</dbReference>
<dbReference type="GO" id="GO:0005080">
    <property type="term" value="F:protein kinase C binding"/>
    <property type="evidence" value="ECO:0000250"/>
    <property type="project" value="UniProtKB"/>
</dbReference>
<dbReference type="GO" id="GO:0060070">
    <property type="term" value="P:canonical Wnt signaling pathway"/>
    <property type="evidence" value="ECO:0007669"/>
    <property type="project" value="Ensembl"/>
</dbReference>
<dbReference type="GO" id="GO:0001837">
    <property type="term" value="P:epithelial to mesenchymal transition"/>
    <property type="evidence" value="ECO:0007669"/>
    <property type="project" value="Ensembl"/>
</dbReference>
<dbReference type="GO" id="GO:0090090">
    <property type="term" value="P:negative regulation of canonical Wnt signaling pathway"/>
    <property type="evidence" value="ECO:0000314"/>
    <property type="project" value="UniProtKB"/>
</dbReference>
<dbReference type="GO" id="GO:0030308">
    <property type="term" value="P:negative regulation of cell growth"/>
    <property type="evidence" value="ECO:0000314"/>
    <property type="project" value="UniProtKB"/>
</dbReference>
<dbReference type="GO" id="GO:0010719">
    <property type="term" value="P:negative regulation of epithelial to mesenchymal transition"/>
    <property type="evidence" value="ECO:0007669"/>
    <property type="project" value="Ensembl"/>
</dbReference>
<dbReference type="GO" id="GO:0030178">
    <property type="term" value="P:negative regulation of Wnt signaling pathway"/>
    <property type="evidence" value="ECO:0000314"/>
    <property type="project" value="UniProtKB"/>
</dbReference>
<dbReference type="InterPro" id="IPR024843">
    <property type="entry name" value="Dapper"/>
</dbReference>
<dbReference type="PANTHER" id="PTHR15919:SF1">
    <property type="entry name" value="DAPPER HOMOLOG 3"/>
    <property type="match status" value="1"/>
</dbReference>
<dbReference type="PANTHER" id="PTHR15919">
    <property type="entry name" value="DAPPER-RELATED"/>
    <property type="match status" value="1"/>
</dbReference>
<dbReference type="Pfam" id="PF15268">
    <property type="entry name" value="Dapper"/>
    <property type="match status" value="2"/>
</dbReference>
<sequence>MIRAFSFPVSPERGRLRGWLEGSLAGLCELHWLRERQEYRVQQALRLAQPGMGGAEAEDEEDADEDEDAAAARRAAAALEEQLEALPGLVWDLGQQLGDLSLESGGLEQESGRSSGFYEDPSSTGGPDSPPSTFCGDSGFSGSSSYGRLGPSEPRGIYASERPKSLGDASPSAPEVVGARAAVPRSFSAPYPTAGGSAGPEACSSAERRARAGPFLTPSPLHAVAMRSPRPCGRPPTDSPDAGGAGRPLDGYISALLRRRRRRGAGQPRTSPGGADGGPRRQNSVRQRPPDASPSPGSARPAREPSLERVGGHPTSPAALSRAWASSWESEAAPEPAAPPAAPSPPDSPAEGRLVKAQYIPGAQAATRGLPGRAARRKPPPLTRGRSVEQSPPRERPRAAGRRGRMAEASGRRGSPRARKASRSQSETSLLGRASAVPSGPPKYPTAEREEPRPPRPRRGPAPTLAAQAAGSCRRWRSTAEIDAADGRRVRPRAPAARVPGPGPSPSAPQRRLLYGCAGSDSECSAGRLGPLGRRGPAGGVGGGYGESESSASEGESPAFSSASSDSDGSGGLVWPQQLVAATAASGGGAGAGAPAGPAKVFVKIKASHALKKKILRFRSGSLKVMTTV</sequence>
<organism>
    <name type="scientific">Homo sapiens</name>
    <name type="common">Human</name>
    <dbReference type="NCBI Taxonomy" id="9606"/>
    <lineage>
        <taxon>Eukaryota</taxon>
        <taxon>Metazoa</taxon>
        <taxon>Chordata</taxon>
        <taxon>Craniata</taxon>
        <taxon>Vertebrata</taxon>
        <taxon>Euteleostomi</taxon>
        <taxon>Mammalia</taxon>
        <taxon>Eutheria</taxon>
        <taxon>Euarchontoglires</taxon>
        <taxon>Primates</taxon>
        <taxon>Haplorrhini</taxon>
        <taxon>Catarrhini</taxon>
        <taxon>Hominidae</taxon>
        <taxon>Homo</taxon>
    </lineage>
</organism>
<name>DACT3_HUMAN</name>
<keyword id="KW-0175">Coiled coil</keyword>
<keyword id="KW-0488">Methylation</keyword>
<keyword id="KW-0597">Phosphoprotein</keyword>
<keyword id="KW-1267">Proteomics identification</keyword>
<keyword id="KW-1185">Reference proteome</keyword>
<keyword id="KW-0879">Wnt signaling pathway</keyword>
<proteinExistence type="evidence at protein level"/>
<gene>
    <name type="primary">DACT3</name>
    <name type="synonym">RRR1</name>
</gene>
<reference key="1">
    <citation type="journal article" date="2004" name="Genome Res.">
        <title>The status, quality, and expansion of the NIH full-length cDNA project: the Mammalian Gene Collection (MGC).</title>
        <authorList>
            <consortium name="The MGC Project Team"/>
        </authorList>
    </citation>
    <scope>NUCLEOTIDE SEQUENCE [LARGE SCALE MRNA]</scope>
    <source>
        <tissue>Skin</tissue>
    </source>
</reference>
<reference key="2">
    <citation type="journal article" date="2006" name="Dev. Dyn.">
        <title>Three Dact gene family members are expressed during embryonic development and in the adult brains of mice.</title>
        <authorList>
            <person name="Fisher D.A."/>
            <person name="Kivimaee S."/>
            <person name="Hoshino J."/>
            <person name="Suriben R."/>
            <person name="Martin P.-M."/>
            <person name="Baxter N."/>
            <person name="Cheyette B.N.R."/>
        </authorList>
    </citation>
    <scope>IDENTIFICATION</scope>
</reference>
<reference key="3">
    <citation type="journal article" date="2008" name="Cancer Cell">
        <title>DACT3 is an epigenetic regulator of Wnt/beta-catenin signaling in colorectal cancer and is a therapeutic target of histone modifications.</title>
        <authorList>
            <person name="Jiang X."/>
            <person name="Tan J."/>
            <person name="Li J."/>
            <person name="Kivimae S."/>
            <person name="Yang X."/>
            <person name="Zhuang L."/>
            <person name="Lee P.L."/>
            <person name="Chan M.T."/>
            <person name="Stanton L.W."/>
            <person name="Liu E.T."/>
            <person name="Cheyette B.N."/>
            <person name="Yu Q."/>
        </authorList>
    </citation>
    <scope>FUNCTION</scope>
    <scope>INTERACTION WITH DVL2</scope>
</reference>
<reference key="4">
    <citation type="journal article" date="2013" name="J. Proteome Res.">
        <title>Toward a comprehensive characterization of a human cancer cell phosphoproteome.</title>
        <authorList>
            <person name="Zhou H."/>
            <person name="Di Palma S."/>
            <person name="Preisinger C."/>
            <person name="Peng M."/>
            <person name="Polat A.N."/>
            <person name="Heck A.J."/>
            <person name="Mohammed S."/>
        </authorList>
    </citation>
    <scope>PHOSPHORYLATION [LARGE SCALE ANALYSIS] AT SER-6; SER-165 AND SER-426</scope>
    <scope>IDENTIFICATION BY MASS SPECTROMETRY [LARGE SCALE ANALYSIS]</scope>
    <source>
        <tissue>Erythroleukemia</tissue>
    </source>
</reference>
<accession>Q96B18</accession>
<comment type="function">
    <text evidence="5">May be involved in regulation of intracellular signaling pathways during development. Specifically thought to play a role in canonical and/or non-canonical Wnt signaling pathways through interaction with DSH (Dishevelled) family proteins.</text>
</comment>
<comment type="subunit">
    <text evidence="1 5">Can form homodimers and heterodimers with DACT1 or DACT3. Interacts with CSNK1D, PKA catalytic subunit, PKC-type kinase, DVL1, DVL3, VANGL1, VANGL2 and CTNND1 (By similarity). Interacts with DVL2.</text>
</comment>
<comment type="domain">
    <text evidence="1">The C-terminal PDZ-binding motif may mediate interaction with the PDZ domains of DSH (Dishevelled) family proteins.</text>
</comment>
<comment type="similarity">
    <text evidence="6">Belongs to the dapper family.</text>
</comment>
<comment type="sequence caution" evidence="6">
    <conflict type="frameshift">
        <sequence resource="EMBL-CDS" id="AAH16161"/>
    </conflict>
</comment>